<name>RS15_CERS5</name>
<feature type="chain" id="PRO_1000054857" description="Small ribosomal subunit protein uS15">
    <location>
        <begin position="1"/>
        <end position="89"/>
    </location>
</feature>
<comment type="function">
    <text evidence="1">One of the primary rRNA binding proteins, it binds directly to 16S rRNA where it helps nucleate assembly of the platform of the 30S subunit by binding and bridging several RNA helices of the 16S rRNA.</text>
</comment>
<comment type="function">
    <text evidence="1">Forms an intersubunit bridge (bridge B4) with the 23S rRNA of the 50S subunit in the ribosome.</text>
</comment>
<comment type="subunit">
    <text evidence="1">Part of the 30S ribosomal subunit. Forms a bridge to the 50S subunit in the 70S ribosome, contacting the 23S rRNA.</text>
</comment>
<comment type="similarity">
    <text evidence="1">Belongs to the universal ribosomal protein uS15 family.</text>
</comment>
<protein>
    <recommendedName>
        <fullName evidence="1">Small ribosomal subunit protein uS15</fullName>
    </recommendedName>
    <alternativeName>
        <fullName evidence="2">30S ribosomal protein S15</fullName>
    </alternativeName>
</protein>
<organism>
    <name type="scientific">Cereibacter sphaeroides (strain ATCC 17025 / ATH 2.4.3)</name>
    <name type="common">Rhodobacter sphaeroides</name>
    <dbReference type="NCBI Taxonomy" id="349102"/>
    <lineage>
        <taxon>Bacteria</taxon>
        <taxon>Pseudomonadati</taxon>
        <taxon>Pseudomonadota</taxon>
        <taxon>Alphaproteobacteria</taxon>
        <taxon>Rhodobacterales</taxon>
        <taxon>Paracoccaceae</taxon>
        <taxon>Cereibacter</taxon>
    </lineage>
</organism>
<gene>
    <name evidence="1" type="primary">rpsO</name>
    <name type="ordered locus">Rsph17025_2919</name>
</gene>
<dbReference type="EMBL" id="CP000661">
    <property type="protein sequence ID" value="ABP71805.1"/>
    <property type="molecule type" value="Genomic_DNA"/>
</dbReference>
<dbReference type="SMR" id="A4WWP1"/>
<dbReference type="STRING" id="349102.Rsph17025_2919"/>
<dbReference type="KEGG" id="rsq:Rsph17025_2919"/>
<dbReference type="eggNOG" id="COG0184">
    <property type="taxonomic scope" value="Bacteria"/>
</dbReference>
<dbReference type="HOGENOM" id="CLU_148518_0_0_5"/>
<dbReference type="BioCyc" id="RSPH349102:G1G8M-3015-MONOMER"/>
<dbReference type="GO" id="GO:0022627">
    <property type="term" value="C:cytosolic small ribosomal subunit"/>
    <property type="evidence" value="ECO:0007669"/>
    <property type="project" value="TreeGrafter"/>
</dbReference>
<dbReference type="GO" id="GO:0019843">
    <property type="term" value="F:rRNA binding"/>
    <property type="evidence" value="ECO:0007669"/>
    <property type="project" value="UniProtKB-UniRule"/>
</dbReference>
<dbReference type="GO" id="GO:0003735">
    <property type="term" value="F:structural constituent of ribosome"/>
    <property type="evidence" value="ECO:0007669"/>
    <property type="project" value="InterPro"/>
</dbReference>
<dbReference type="GO" id="GO:0006412">
    <property type="term" value="P:translation"/>
    <property type="evidence" value="ECO:0007669"/>
    <property type="project" value="UniProtKB-UniRule"/>
</dbReference>
<dbReference type="CDD" id="cd00353">
    <property type="entry name" value="Ribosomal_S15p_S13e"/>
    <property type="match status" value="1"/>
</dbReference>
<dbReference type="FunFam" id="1.10.287.10:FF:000002">
    <property type="entry name" value="30S ribosomal protein S15"/>
    <property type="match status" value="1"/>
</dbReference>
<dbReference type="Gene3D" id="6.10.250.3130">
    <property type="match status" value="1"/>
</dbReference>
<dbReference type="Gene3D" id="1.10.287.10">
    <property type="entry name" value="S15/NS1, RNA-binding"/>
    <property type="match status" value="1"/>
</dbReference>
<dbReference type="HAMAP" id="MF_01343_B">
    <property type="entry name" value="Ribosomal_uS15_B"/>
    <property type="match status" value="1"/>
</dbReference>
<dbReference type="InterPro" id="IPR000589">
    <property type="entry name" value="Ribosomal_uS15"/>
</dbReference>
<dbReference type="InterPro" id="IPR005290">
    <property type="entry name" value="Ribosomal_uS15_bac-type"/>
</dbReference>
<dbReference type="InterPro" id="IPR009068">
    <property type="entry name" value="uS15_NS1_RNA-bd_sf"/>
</dbReference>
<dbReference type="NCBIfam" id="TIGR00952">
    <property type="entry name" value="S15_bact"/>
    <property type="match status" value="1"/>
</dbReference>
<dbReference type="PANTHER" id="PTHR23321">
    <property type="entry name" value="RIBOSOMAL PROTEIN S15, BACTERIAL AND ORGANELLAR"/>
    <property type="match status" value="1"/>
</dbReference>
<dbReference type="PANTHER" id="PTHR23321:SF26">
    <property type="entry name" value="SMALL RIBOSOMAL SUBUNIT PROTEIN US15M"/>
    <property type="match status" value="1"/>
</dbReference>
<dbReference type="Pfam" id="PF00312">
    <property type="entry name" value="Ribosomal_S15"/>
    <property type="match status" value="1"/>
</dbReference>
<dbReference type="SMART" id="SM01387">
    <property type="entry name" value="Ribosomal_S15"/>
    <property type="match status" value="1"/>
</dbReference>
<dbReference type="SUPFAM" id="SSF47060">
    <property type="entry name" value="S15/NS1 RNA-binding domain"/>
    <property type="match status" value="1"/>
</dbReference>
<dbReference type="PROSITE" id="PS00362">
    <property type="entry name" value="RIBOSOMAL_S15"/>
    <property type="match status" value="1"/>
</dbReference>
<sequence length="89" mass="10282">MSITVEEKARLIKEYATKEGDTGSPEVQVAILSSRIATLTEHFKSHKKDNHSRRGLLMMVAQRRKLLDYLKKKEEARYTALIARLGLRR</sequence>
<reference key="1">
    <citation type="submission" date="2007-04" db="EMBL/GenBank/DDBJ databases">
        <title>Complete sequence of chromosome of Rhodobacter sphaeroides ATCC 17025.</title>
        <authorList>
            <consortium name="US DOE Joint Genome Institute"/>
            <person name="Copeland A."/>
            <person name="Lucas S."/>
            <person name="Lapidus A."/>
            <person name="Barry K."/>
            <person name="Detter J.C."/>
            <person name="Glavina del Rio T."/>
            <person name="Hammon N."/>
            <person name="Israni S."/>
            <person name="Dalin E."/>
            <person name="Tice H."/>
            <person name="Pitluck S."/>
            <person name="Chertkov O."/>
            <person name="Brettin T."/>
            <person name="Bruce D."/>
            <person name="Han C."/>
            <person name="Schmutz J."/>
            <person name="Larimer F."/>
            <person name="Land M."/>
            <person name="Hauser L."/>
            <person name="Kyrpides N."/>
            <person name="Kim E."/>
            <person name="Richardson P."/>
            <person name="Mackenzie C."/>
            <person name="Choudhary M."/>
            <person name="Donohue T.J."/>
            <person name="Kaplan S."/>
        </authorList>
    </citation>
    <scope>NUCLEOTIDE SEQUENCE [LARGE SCALE GENOMIC DNA]</scope>
    <source>
        <strain>ATCC 17025 / ATH 2.4.3</strain>
    </source>
</reference>
<proteinExistence type="inferred from homology"/>
<evidence type="ECO:0000255" key="1">
    <source>
        <dbReference type="HAMAP-Rule" id="MF_01343"/>
    </source>
</evidence>
<evidence type="ECO:0000305" key="2"/>
<accession>A4WWP1</accession>
<keyword id="KW-0687">Ribonucleoprotein</keyword>
<keyword id="KW-0689">Ribosomal protein</keyword>
<keyword id="KW-0694">RNA-binding</keyword>
<keyword id="KW-0699">rRNA-binding</keyword>